<evidence type="ECO:0000250" key="1"/>
<evidence type="ECO:0000255" key="2"/>
<evidence type="ECO:0000255" key="3">
    <source>
        <dbReference type="PROSITE-ProRule" id="PRU00040"/>
    </source>
</evidence>
<evidence type="ECO:0000305" key="4"/>
<name>SLAB2_TRIST</name>
<keyword id="KW-1015">Disulfide bond</keyword>
<keyword id="KW-0325">Glycoprotein</keyword>
<keyword id="KW-1199">Hemostasis impairing toxin</keyword>
<keyword id="KW-0964">Secreted</keyword>
<keyword id="KW-0732">Signal</keyword>
<keyword id="KW-0800">Toxin</keyword>
<sequence>MGQFIFVSFGLLVVLLSLSGAGAGFCCPLGWSSYDLYCYKVFKQQMNWTDAEKFCTEQHTGSHLVSFHSSEEADFVVNMTYPILKLDFVWIGLSNVWNQCNSEWSDGTKLDYKDWSGESECIASKTVENQWWTKSCSRTHYVVCKFQA</sequence>
<proteinExistence type="evidence at transcript level"/>
<comment type="function">
    <text evidence="1">Interferes with one step of hemostasis (modulation of platelet aggregation, or coagulation cascade, for example).</text>
</comment>
<comment type="subunit">
    <text evidence="1">Heteromultimer; disulfide-linked.</text>
</comment>
<comment type="subcellular location">
    <subcellularLocation>
        <location evidence="1">Secreted</location>
    </subcellularLocation>
</comment>
<comment type="tissue specificity">
    <text>Expressed by the venom gland.</text>
</comment>
<comment type="similarity">
    <text evidence="4">Belongs to the snaclec family.</text>
</comment>
<accession>Q71RP9</accession>
<protein>
    <recommendedName>
        <fullName>Snaclec stejaggregin-A subunit beta-2</fullName>
    </recommendedName>
</protein>
<feature type="signal peptide" evidence="2">
    <location>
        <begin position="1"/>
        <end position="23"/>
    </location>
</feature>
<feature type="chain" id="PRO_0000355303" description="Snaclec stejaggregin-A subunit beta-2">
    <location>
        <begin position="24"/>
        <end position="148"/>
    </location>
</feature>
<feature type="domain" description="C-type lectin" evidence="3">
    <location>
        <begin position="34"/>
        <end position="145"/>
    </location>
</feature>
<feature type="glycosylation site" description="N-linked (GlcNAc...) asparagine" evidence="2">
    <location>
        <position position="47"/>
    </location>
</feature>
<feature type="glycosylation site" description="N-linked (GlcNAc...) asparagine" evidence="2">
    <location>
        <position position="78"/>
    </location>
</feature>
<feature type="disulfide bond" description="Interchain" evidence="3">
    <location>
        <position position="26"/>
    </location>
</feature>
<feature type="disulfide bond" evidence="3">
    <location>
        <begin position="27"/>
        <end position="38"/>
    </location>
</feature>
<feature type="disulfide bond" evidence="3">
    <location>
        <begin position="55"/>
        <end position="144"/>
    </location>
</feature>
<feature type="disulfide bond" description="Interchain" evidence="3">
    <location>
        <position position="100"/>
    </location>
</feature>
<feature type="disulfide bond" evidence="3">
    <location>
        <begin position="121"/>
        <end position="136"/>
    </location>
</feature>
<reference key="1">
    <citation type="submission" date="2001-03" db="EMBL/GenBank/DDBJ databases">
        <title>Cloning and characterization of C-type lectins from Trimeresurus stejnegeri venom.</title>
        <authorList>
            <person name="Lee W.-H."/>
            <person name="Liu H."/>
            <person name="Zhang Y."/>
        </authorList>
    </citation>
    <scope>NUCLEOTIDE SEQUENCE [MRNA]</scope>
    <source>
        <tissue>Venom gland</tissue>
    </source>
</reference>
<organism>
    <name type="scientific">Trimeresurus stejnegeri</name>
    <name type="common">Chinese green tree viper</name>
    <name type="synonym">Viridovipera stejnegeri</name>
    <dbReference type="NCBI Taxonomy" id="39682"/>
    <lineage>
        <taxon>Eukaryota</taxon>
        <taxon>Metazoa</taxon>
        <taxon>Chordata</taxon>
        <taxon>Craniata</taxon>
        <taxon>Vertebrata</taxon>
        <taxon>Euteleostomi</taxon>
        <taxon>Lepidosauria</taxon>
        <taxon>Squamata</taxon>
        <taxon>Bifurcata</taxon>
        <taxon>Unidentata</taxon>
        <taxon>Episquamata</taxon>
        <taxon>Toxicofera</taxon>
        <taxon>Serpentes</taxon>
        <taxon>Colubroidea</taxon>
        <taxon>Viperidae</taxon>
        <taxon>Crotalinae</taxon>
        <taxon>Trimeresurus</taxon>
    </lineage>
</organism>
<dbReference type="EMBL" id="AF354926">
    <property type="protein sequence ID" value="AAQ15168.1"/>
    <property type="molecule type" value="mRNA"/>
</dbReference>
<dbReference type="SMR" id="Q71RP9"/>
<dbReference type="GO" id="GO:0005576">
    <property type="term" value="C:extracellular region"/>
    <property type="evidence" value="ECO:0007669"/>
    <property type="project" value="UniProtKB-SubCell"/>
</dbReference>
<dbReference type="GO" id="GO:0090729">
    <property type="term" value="F:toxin activity"/>
    <property type="evidence" value="ECO:0007669"/>
    <property type="project" value="UniProtKB-KW"/>
</dbReference>
<dbReference type="FunFam" id="3.10.100.10:FF:000087">
    <property type="entry name" value="Snaclec rhodocetin subunit delta"/>
    <property type="match status" value="1"/>
</dbReference>
<dbReference type="Gene3D" id="3.10.100.10">
    <property type="entry name" value="Mannose-Binding Protein A, subunit A"/>
    <property type="match status" value="1"/>
</dbReference>
<dbReference type="InterPro" id="IPR001304">
    <property type="entry name" value="C-type_lectin-like"/>
</dbReference>
<dbReference type="InterPro" id="IPR016186">
    <property type="entry name" value="C-type_lectin-like/link_sf"/>
</dbReference>
<dbReference type="InterPro" id="IPR050111">
    <property type="entry name" value="C-type_lectin/snaclec_domain"/>
</dbReference>
<dbReference type="InterPro" id="IPR016187">
    <property type="entry name" value="CTDL_fold"/>
</dbReference>
<dbReference type="PANTHER" id="PTHR22803">
    <property type="entry name" value="MANNOSE, PHOSPHOLIPASE, LECTIN RECEPTOR RELATED"/>
    <property type="match status" value="1"/>
</dbReference>
<dbReference type="Pfam" id="PF00059">
    <property type="entry name" value="Lectin_C"/>
    <property type="match status" value="1"/>
</dbReference>
<dbReference type="PRINTS" id="PR01504">
    <property type="entry name" value="PNCREATITSAP"/>
</dbReference>
<dbReference type="SMART" id="SM00034">
    <property type="entry name" value="CLECT"/>
    <property type="match status" value="1"/>
</dbReference>
<dbReference type="SUPFAM" id="SSF56436">
    <property type="entry name" value="C-type lectin-like"/>
    <property type="match status" value="1"/>
</dbReference>
<dbReference type="PROSITE" id="PS50041">
    <property type="entry name" value="C_TYPE_LECTIN_2"/>
    <property type="match status" value="1"/>
</dbReference>